<reference key="1">
    <citation type="journal article" date="1996" name="Microbiology">
        <title>Identification of an EF-Tu protein that is periplasm-associated and processed in Neisseria gonorrhoeae.</title>
        <authorList>
            <person name="Porcella S.F."/>
            <person name="Belland R.J."/>
            <person name="Judd R.C."/>
        </authorList>
    </citation>
    <scope>NUCLEOTIDE SEQUENCE [GENOMIC DNA]</scope>
    <source>
        <strain>MS11</strain>
    </source>
</reference>
<proteinExistence type="inferred from homology"/>
<feature type="chain" id="PRO_0000091166" description="Elongation factor G">
    <location>
        <begin position="1" status="less than"/>
        <end position="226"/>
    </location>
</feature>
<feature type="non-terminal residue">
    <location>
        <position position="1"/>
    </location>
</feature>
<gene>
    <name type="primary">fusA</name>
</gene>
<name>EFG_NEIGO</name>
<evidence type="ECO:0000250" key="1"/>
<evidence type="ECO:0000305" key="2"/>
<protein>
    <recommendedName>
        <fullName>Elongation factor G</fullName>
        <shortName>EF-G</shortName>
    </recommendedName>
</protein>
<comment type="function">
    <text evidence="1">Catalyzes the GTP-dependent ribosomal translocation step during translation elongation. During this step, the ribosome changes from the pre-translocational (PRE) to the post-translocational (POST) state as the newly formed A-site-bound peptidyl-tRNA and P-site-bound deacylated tRNA move to the P and E sites, respectively. Catalyzes the coordinated movement of the two tRNA molecules, the mRNA and conformational changes in the ribosome (By similarity).</text>
</comment>
<comment type="subcellular location">
    <subcellularLocation>
        <location evidence="1">Cytoplasm</location>
    </subcellularLocation>
</comment>
<comment type="similarity">
    <text evidence="2">Belongs to the GTP-binding elongation factor family. EF-G/EF-2 subfamily.</text>
</comment>
<accession>P48862</accession>
<keyword id="KW-0963">Cytoplasm</keyword>
<keyword id="KW-0251">Elongation factor</keyword>
<keyword id="KW-0342">GTP-binding</keyword>
<keyword id="KW-0547">Nucleotide-binding</keyword>
<keyword id="KW-0648">Protein biosynthesis</keyword>
<sequence length="226" mass="24902">KFGVEANIGAPQVAYRETIRKAVKAEYKHAKQSGGKGQYGHVVIEMEPMEPGGEGYEFIDEIKGGVIPREFIRLSIKVSAILAYRYRCRLSVVDVRIRLVFGSYHDVDSSQLAFELAASQAFKEGMRQASPALLEPIMAVEVETPEEYMGDVMGDLNRRRGVVLGMDDDGIGGKKVRAEVPLAEMFGYSTDLRSATQGRATYSMEFKKYSEAPAHIAAAVTEARKG</sequence>
<organism>
    <name type="scientific">Neisseria gonorrhoeae</name>
    <dbReference type="NCBI Taxonomy" id="485"/>
    <lineage>
        <taxon>Bacteria</taxon>
        <taxon>Pseudomonadati</taxon>
        <taxon>Pseudomonadota</taxon>
        <taxon>Betaproteobacteria</taxon>
        <taxon>Neisseriales</taxon>
        <taxon>Neisseriaceae</taxon>
        <taxon>Neisseria</taxon>
    </lineage>
</organism>
<dbReference type="EMBL" id="L36380">
    <property type="protein sequence ID" value="AAB41516.1"/>
    <property type="molecule type" value="Genomic_DNA"/>
</dbReference>
<dbReference type="PIR" id="T10167">
    <property type="entry name" value="T10167"/>
</dbReference>
<dbReference type="SMR" id="P48862"/>
<dbReference type="GO" id="GO:0005737">
    <property type="term" value="C:cytoplasm"/>
    <property type="evidence" value="ECO:0007669"/>
    <property type="project" value="UniProtKB-SubCell"/>
</dbReference>
<dbReference type="GO" id="GO:0005525">
    <property type="term" value="F:GTP binding"/>
    <property type="evidence" value="ECO:0007669"/>
    <property type="project" value="UniProtKB-KW"/>
</dbReference>
<dbReference type="GO" id="GO:0017111">
    <property type="term" value="F:ribonucleoside triphosphate phosphatase activity"/>
    <property type="evidence" value="ECO:0007669"/>
    <property type="project" value="UniProtKB-ARBA"/>
</dbReference>
<dbReference type="GO" id="GO:0003746">
    <property type="term" value="F:translation elongation factor activity"/>
    <property type="evidence" value="ECO:0007669"/>
    <property type="project" value="UniProtKB-KW"/>
</dbReference>
<dbReference type="GO" id="GO:0032790">
    <property type="term" value="P:ribosome disassembly"/>
    <property type="evidence" value="ECO:0007669"/>
    <property type="project" value="TreeGrafter"/>
</dbReference>
<dbReference type="CDD" id="cd01434">
    <property type="entry name" value="EFG_mtEFG1_IV"/>
    <property type="match status" value="1"/>
</dbReference>
<dbReference type="CDD" id="cd03713">
    <property type="entry name" value="EFG_mtEFG_C"/>
    <property type="match status" value="1"/>
</dbReference>
<dbReference type="FunFam" id="3.30.70.240:FF:000001">
    <property type="entry name" value="Elongation factor G"/>
    <property type="match status" value="1"/>
</dbReference>
<dbReference type="Gene3D" id="3.30.230.10">
    <property type="match status" value="1"/>
</dbReference>
<dbReference type="Gene3D" id="3.30.70.240">
    <property type="match status" value="1"/>
</dbReference>
<dbReference type="InterPro" id="IPR035647">
    <property type="entry name" value="EFG_III/V"/>
</dbReference>
<dbReference type="InterPro" id="IPR047872">
    <property type="entry name" value="EFG_IV"/>
</dbReference>
<dbReference type="InterPro" id="IPR035649">
    <property type="entry name" value="EFG_V"/>
</dbReference>
<dbReference type="InterPro" id="IPR000640">
    <property type="entry name" value="EFG_V-like"/>
</dbReference>
<dbReference type="InterPro" id="IPR020568">
    <property type="entry name" value="Ribosomal_Su5_D2-typ_SF"/>
</dbReference>
<dbReference type="InterPro" id="IPR014721">
    <property type="entry name" value="Ribsml_uS5_D2-typ_fold_subgr"/>
</dbReference>
<dbReference type="InterPro" id="IPR005517">
    <property type="entry name" value="Transl_elong_EFG/EF2_IV"/>
</dbReference>
<dbReference type="PANTHER" id="PTHR43261:SF1">
    <property type="entry name" value="RIBOSOME-RELEASING FACTOR 2, MITOCHONDRIAL"/>
    <property type="match status" value="1"/>
</dbReference>
<dbReference type="PANTHER" id="PTHR43261">
    <property type="entry name" value="TRANSLATION ELONGATION FACTOR G-RELATED"/>
    <property type="match status" value="1"/>
</dbReference>
<dbReference type="Pfam" id="PF00679">
    <property type="entry name" value="EFG_C"/>
    <property type="match status" value="1"/>
</dbReference>
<dbReference type="Pfam" id="PF03764">
    <property type="entry name" value="EFG_IV"/>
    <property type="match status" value="1"/>
</dbReference>
<dbReference type="SMART" id="SM00838">
    <property type="entry name" value="EFG_C"/>
    <property type="match status" value="1"/>
</dbReference>
<dbReference type="SMART" id="SM00889">
    <property type="entry name" value="EFG_IV"/>
    <property type="match status" value="1"/>
</dbReference>
<dbReference type="SUPFAM" id="SSF54980">
    <property type="entry name" value="EF-G C-terminal domain-like"/>
    <property type="match status" value="1"/>
</dbReference>
<dbReference type="SUPFAM" id="SSF54211">
    <property type="entry name" value="Ribosomal protein S5 domain 2-like"/>
    <property type="match status" value="1"/>
</dbReference>